<evidence type="ECO:0000255" key="1">
    <source>
        <dbReference type="HAMAP-Rule" id="MF_01631"/>
    </source>
</evidence>
<evidence type="ECO:0000256" key="2">
    <source>
        <dbReference type="SAM" id="MobiDB-lite"/>
    </source>
</evidence>
<keyword id="KW-0012">Acyltransferase</keyword>
<keyword id="KW-0133">Cell shape</keyword>
<keyword id="KW-0961">Cell wall biogenesis/degradation</keyword>
<keyword id="KW-0963">Cytoplasm</keyword>
<keyword id="KW-0460">Magnesium</keyword>
<keyword id="KW-0479">Metal-binding</keyword>
<keyword id="KW-0511">Multifunctional enzyme</keyword>
<keyword id="KW-0548">Nucleotidyltransferase</keyword>
<keyword id="KW-0573">Peptidoglycan synthesis</keyword>
<keyword id="KW-1185">Reference proteome</keyword>
<keyword id="KW-0677">Repeat</keyword>
<keyword id="KW-0808">Transferase</keyword>
<sequence length="491" mass="50601">MTTQPAVPAAVIVLAAGEGTRMRSATPKVLHPLGGRPLVGHALRAARGTAPEHLVVVLRHQADRVREALAGDFPSVLVALQDDVPGTGRAVQCALEALPADLSGTVLVTYGDVPLLSSATLQRLAGAHAAGGNAVTVLTALLADPTGYGRVLRDGTGVTGIVEQKDATAEQLAVREVNSGVYAFEAAALRESLGRVGRDNAAGEVYLTDVLSLVRAAGGRVEALALEDEWEIRGVNDRAQLADLAAEANRRTLRRWMLAGVTIADPATTWIDADVELAPDVTIRPGVQLHGTTRVATGAVVGPDSTLTDVEVGAGALVERTHGSSAVVGEGAQVGPFAFLRPGTRLGAEGKIGTFVETKNATIGRGSKVPHLSYVGDATIGEHSNIGAASVFVNYDGVNKARTTVGDHVRMGSDNMYVAPVTVGDGAYSGAGTVIRKDVPAGALAINVAPQRNLEGWTLAKRPGTPAAEAAQRANDESTGTTASTDREIQP</sequence>
<proteinExistence type="inferred from homology"/>
<comment type="function">
    <text evidence="1">Catalyzes the last two sequential reactions in the de novo biosynthetic pathway for UDP-N-acetylglucosamine (UDP-GlcNAc). The C-terminal domain catalyzes the transfer of acetyl group from acetyl coenzyme A to glucosamine-1-phosphate (GlcN-1-P) to produce N-acetylglucosamine-1-phosphate (GlcNAc-1-P), which is converted into UDP-GlcNAc by the transfer of uridine 5-monophosphate (from uridine 5-triphosphate), a reaction catalyzed by the N-terminal domain.</text>
</comment>
<comment type="catalytic activity">
    <reaction evidence="1">
        <text>alpha-D-glucosamine 1-phosphate + acetyl-CoA = N-acetyl-alpha-D-glucosamine 1-phosphate + CoA + H(+)</text>
        <dbReference type="Rhea" id="RHEA:13725"/>
        <dbReference type="ChEBI" id="CHEBI:15378"/>
        <dbReference type="ChEBI" id="CHEBI:57287"/>
        <dbReference type="ChEBI" id="CHEBI:57288"/>
        <dbReference type="ChEBI" id="CHEBI:57776"/>
        <dbReference type="ChEBI" id="CHEBI:58516"/>
        <dbReference type="EC" id="2.3.1.157"/>
    </reaction>
</comment>
<comment type="catalytic activity">
    <reaction evidence="1">
        <text>N-acetyl-alpha-D-glucosamine 1-phosphate + UTP + H(+) = UDP-N-acetyl-alpha-D-glucosamine + diphosphate</text>
        <dbReference type="Rhea" id="RHEA:13509"/>
        <dbReference type="ChEBI" id="CHEBI:15378"/>
        <dbReference type="ChEBI" id="CHEBI:33019"/>
        <dbReference type="ChEBI" id="CHEBI:46398"/>
        <dbReference type="ChEBI" id="CHEBI:57705"/>
        <dbReference type="ChEBI" id="CHEBI:57776"/>
        <dbReference type="EC" id="2.7.7.23"/>
    </reaction>
</comment>
<comment type="cofactor">
    <cofactor evidence="1">
        <name>Mg(2+)</name>
        <dbReference type="ChEBI" id="CHEBI:18420"/>
    </cofactor>
    <text evidence="1">Binds 1 Mg(2+) ion per subunit.</text>
</comment>
<comment type="pathway">
    <text evidence="1">Nucleotide-sugar biosynthesis; UDP-N-acetyl-alpha-D-glucosamine biosynthesis; N-acetyl-alpha-D-glucosamine 1-phosphate from alpha-D-glucosamine 6-phosphate (route II): step 2/2.</text>
</comment>
<comment type="pathway">
    <text evidence="1">Nucleotide-sugar biosynthesis; UDP-N-acetyl-alpha-D-glucosamine biosynthesis; UDP-N-acetyl-alpha-D-glucosamine from N-acetyl-alpha-D-glucosamine 1-phosphate: step 1/1.</text>
</comment>
<comment type="pathway">
    <text evidence="1">Bacterial outer membrane biogenesis; LPS lipid A biosynthesis.</text>
</comment>
<comment type="subunit">
    <text evidence="1">Homotrimer.</text>
</comment>
<comment type="subcellular location">
    <subcellularLocation>
        <location evidence="1">Cytoplasm</location>
    </subcellularLocation>
</comment>
<comment type="similarity">
    <text evidence="1">In the N-terminal section; belongs to the N-acetylglucosamine-1-phosphate uridyltransferase family.</text>
</comment>
<comment type="similarity">
    <text evidence="1">In the C-terminal section; belongs to the transferase hexapeptide repeat family.</text>
</comment>
<accession>A6W6V0</accession>
<organism>
    <name type="scientific">Kineococcus radiotolerans (strain ATCC BAA-149 / DSM 14245 / SRS30216)</name>
    <dbReference type="NCBI Taxonomy" id="266940"/>
    <lineage>
        <taxon>Bacteria</taxon>
        <taxon>Bacillati</taxon>
        <taxon>Actinomycetota</taxon>
        <taxon>Actinomycetes</taxon>
        <taxon>Kineosporiales</taxon>
        <taxon>Kineosporiaceae</taxon>
        <taxon>Kineococcus</taxon>
    </lineage>
</organism>
<reference key="1">
    <citation type="journal article" date="2008" name="PLoS ONE">
        <title>Survival in nuclear waste, extreme resistance, and potential applications gleaned from the genome sequence of Kineococcus radiotolerans SRS30216.</title>
        <authorList>
            <person name="Bagwell C.E."/>
            <person name="Bhat S."/>
            <person name="Hawkins G.M."/>
            <person name="Smith B.W."/>
            <person name="Biswas T."/>
            <person name="Hoover T.R."/>
            <person name="Saunders E."/>
            <person name="Han C.S."/>
            <person name="Tsodikov O.V."/>
            <person name="Shimkets L.J."/>
        </authorList>
    </citation>
    <scope>NUCLEOTIDE SEQUENCE [LARGE SCALE GENOMIC DNA]</scope>
    <source>
        <strain>ATCC BAA-149 / DSM 14245 / SRS30216</strain>
    </source>
</reference>
<gene>
    <name evidence="1" type="primary">glmU</name>
    <name type="ordered locus">Krad_1051</name>
</gene>
<name>GLMU_KINRD</name>
<dbReference type="EC" id="2.7.7.23" evidence="1"/>
<dbReference type="EC" id="2.3.1.157" evidence="1"/>
<dbReference type="EMBL" id="CP000750">
    <property type="protein sequence ID" value="ABS02539.1"/>
    <property type="molecule type" value="Genomic_DNA"/>
</dbReference>
<dbReference type="RefSeq" id="WP_012084609.1">
    <property type="nucleotide sequence ID" value="NC_009664.2"/>
</dbReference>
<dbReference type="SMR" id="A6W6V0"/>
<dbReference type="STRING" id="266940.Krad_1051"/>
<dbReference type="KEGG" id="kra:Krad_1051"/>
<dbReference type="eggNOG" id="COG1207">
    <property type="taxonomic scope" value="Bacteria"/>
</dbReference>
<dbReference type="HOGENOM" id="CLU_029499_15_2_11"/>
<dbReference type="OrthoDB" id="9775031at2"/>
<dbReference type="UniPathway" id="UPA00113">
    <property type="reaction ID" value="UER00532"/>
</dbReference>
<dbReference type="UniPathway" id="UPA00113">
    <property type="reaction ID" value="UER00533"/>
</dbReference>
<dbReference type="UniPathway" id="UPA00973"/>
<dbReference type="Proteomes" id="UP000001116">
    <property type="component" value="Chromosome"/>
</dbReference>
<dbReference type="GO" id="GO:0005737">
    <property type="term" value="C:cytoplasm"/>
    <property type="evidence" value="ECO:0007669"/>
    <property type="project" value="UniProtKB-SubCell"/>
</dbReference>
<dbReference type="GO" id="GO:0016020">
    <property type="term" value="C:membrane"/>
    <property type="evidence" value="ECO:0007669"/>
    <property type="project" value="GOC"/>
</dbReference>
<dbReference type="GO" id="GO:0019134">
    <property type="term" value="F:glucosamine-1-phosphate N-acetyltransferase activity"/>
    <property type="evidence" value="ECO:0007669"/>
    <property type="project" value="UniProtKB-UniRule"/>
</dbReference>
<dbReference type="GO" id="GO:0000287">
    <property type="term" value="F:magnesium ion binding"/>
    <property type="evidence" value="ECO:0007669"/>
    <property type="project" value="UniProtKB-UniRule"/>
</dbReference>
<dbReference type="GO" id="GO:0003977">
    <property type="term" value="F:UDP-N-acetylglucosamine diphosphorylase activity"/>
    <property type="evidence" value="ECO:0007669"/>
    <property type="project" value="UniProtKB-UniRule"/>
</dbReference>
<dbReference type="GO" id="GO:0000902">
    <property type="term" value="P:cell morphogenesis"/>
    <property type="evidence" value="ECO:0007669"/>
    <property type="project" value="UniProtKB-UniRule"/>
</dbReference>
<dbReference type="GO" id="GO:0071555">
    <property type="term" value="P:cell wall organization"/>
    <property type="evidence" value="ECO:0007669"/>
    <property type="project" value="UniProtKB-KW"/>
</dbReference>
<dbReference type="GO" id="GO:0009245">
    <property type="term" value="P:lipid A biosynthetic process"/>
    <property type="evidence" value="ECO:0007669"/>
    <property type="project" value="UniProtKB-UniRule"/>
</dbReference>
<dbReference type="GO" id="GO:0009252">
    <property type="term" value="P:peptidoglycan biosynthetic process"/>
    <property type="evidence" value="ECO:0007669"/>
    <property type="project" value="UniProtKB-UniRule"/>
</dbReference>
<dbReference type="GO" id="GO:0008360">
    <property type="term" value="P:regulation of cell shape"/>
    <property type="evidence" value="ECO:0007669"/>
    <property type="project" value="UniProtKB-KW"/>
</dbReference>
<dbReference type="GO" id="GO:0006048">
    <property type="term" value="P:UDP-N-acetylglucosamine biosynthetic process"/>
    <property type="evidence" value="ECO:0007669"/>
    <property type="project" value="UniProtKB-UniPathway"/>
</dbReference>
<dbReference type="CDD" id="cd02540">
    <property type="entry name" value="GT2_GlmU_N_bac"/>
    <property type="match status" value="1"/>
</dbReference>
<dbReference type="CDD" id="cd03353">
    <property type="entry name" value="LbH_GlmU_C"/>
    <property type="match status" value="1"/>
</dbReference>
<dbReference type="Gene3D" id="2.160.10.10">
    <property type="entry name" value="Hexapeptide repeat proteins"/>
    <property type="match status" value="1"/>
</dbReference>
<dbReference type="Gene3D" id="3.90.550.10">
    <property type="entry name" value="Spore Coat Polysaccharide Biosynthesis Protein SpsA, Chain A"/>
    <property type="match status" value="1"/>
</dbReference>
<dbReference type="HAMAP" id="MF_01631">
    <property type="entry name" value="GlmU"/>
    <property type="match status" value="1"/>
</dbReference>
<dbReference type="InterPro" id="IPR005882">
    <property type="entry name" value="Bifunctional_GlmU"/>
</dbReference>
<dbReference type="InterPro" id="IPR050065">
    <property type="entry name" value="GlmU-like"/>
</dbReference>
<dbReference type="InterPro" id="IPR038009">
    <property type="entry name" value="GlmU_C_LbH"/>
</dbReference>
<dbReference type="InterPro" id="IPR025877">
    <property type="entry name" value="MobA-like_NTP_Trfase"/>
</dbReference>
<dbReference type="InterPro" id="IPR029044">
    <property type="entry name" value="Nucleotide-diphossugar_trans"/>
</dbReference>
<dbReference type="InterPro" id="IPR011004">
    <property type="entry name" value="Trimer_LpxA-like_sf"/>
</dbReference>
<dbReference type="NCBIfam" id="TIGR01173">
    <property type="entry name" value="glmU"/>
    <property type="match status" value="1"/>
</dbReference>
<dbReference type="NCBIfam" id="NF010932">
    <property type="entry name" value="PRK14352.1"/>
    <property type="match status" value="1"/>
</dbReference>
<dbReference type="PANTHER" id="PTHR43584:SF3">
    <property type="entry name" value="BIFUNCTIONAL PROTEIN GLMU"/>
    <property type="match status" value="1"/>
</dbReference>
<dbReference type="PANTHER" id="PTHR43584">
    <property type="entry name" value="NUCLEOTIDYL TRANSFERASE"/>
    <property type="match status" value="1"/>
</dbReference>
<dbReference type="Pfam" id="PF12804">
    <property type="entry name" value="NTP_transf_3"/>
    <property type="match status" value="1"/>
</dbReference>
<dbReference type="SUPFAM" id="SSF53448">
    <property type="entry name" value="Nucleotide-diphospho-sugar transferases"/>
    <property type="match status" value="1"/>
</dbReference>
<dbReference type="SUPFAM" id="SSF51161">
    <property type="entry name" value="Trimeric LpxA-like enzymes"/>
    <property type="match status" value="1"/>
</dbReference>
<protein>
    <recommendedName>
        <fullName evidence="1">Bifunctional protein GlmU</fullName>
    </recommendedName>
    <domain>
        <recommendedName>
            <fullName evidence="1">UDP-N-acetylglucosamine pyrophosphorylase</fullName>
            <ecNumber evidence="1">2.7.7.23</ecNumber>
        </recommendedName>
        <alternativeName>
            <fullName evidence="1">N-acetylglucosamine-1-phosphate uridyltransferase</fullName>
        </alternativeName>
    </domain>
    <domain>
        <recommendedName>
            <fullName evidence="1">Glucosamine-1-phosphate N-acetyltransferase</fullName>
            <ecNumber evidence="1">2.3.1.157</ecNumber>
        </recommendedName>
    </domain>
</protein>
<feature type="chain" id="PRO_0000337724" description="Bifunctional protein GlmU">
    <location>
        <begin position="1"/>
        <end position="491"/>
    </location>
</feature>
<feature type="region of interest" description="Pyrophosphorylase" evidence="1">
    <location>
        <begin position="1"/>
        <end position="238"/>
    </location>
</feature>
<feature type="region of interest" description="Linker" evidence="1">
    <location>
        <begin position="239"/>
        <end position="259"/>
    </location>
</feature>
<feature type="region of interest" description="N-acetyltransferase" evidence="1">
    <location>
        <begin position="260"/>
        <end position="491"/>
    </location>
</feature>
<feature type="region of interest" description="Disordered" evidence="2">
    <location>
        <begin position="460"/>
        <end position="491"/>
    </location>
</feature>
<feature type="active site" description="Proton acceptor" evidence="1">
    <location>
        <position position="371"/>
    </location>
</feature>
<feature type="binding site" evidence="1">
    <location>
        <begin position="14"/>
        <end position="17"/>
    </location>
    <ligand>
        <name>UDP-N-acetyl-alpha-D-glucosamine</name>
        <dbReference type="ChEBI" id="CHEBI:57705"/>
    </ligand>
</feature>
<feature type="binding site" evidence="1">
    <location>
        <position position="28"/>
    </location>
    <ligand>
        <name>UDP-N-acetyl-alpha-D-glucosamine</name>
        <dbReference type="ChEBI" id="CHEBI:57705"/>
    </ligand>
</feature>
<feature type="binding site" evidence="1">
    <location>
        <position position="81"/>
    </location>
    <ligand>
        <name>UDP-N-acetyl-alpha-D-glucosamine</name>
        <dbReference type="ChEBI" id="CHEBI:57705"/>
    </ligand>
</feature>
<feature type="binding site" evidence="1">
    <location>
        <begin position="86"/>
        <end position="87"/>
    </location>
    <ligand>
        <name>UDP-N-acetyl-alpha-D-glucosamine</name>
        <dbReference type="ChEBI" id="CHEBI:57705"/>
    </ligand>
</feature>
<feature type="binding site" evidence="1">
    <location>
        <begin position="110"/>
        <end position="112"/>
    </location>
    <ligand>
        <name>UDP-N-acetyl-alpha-D-glucosamine</name>
        <dbReference type="ChEBI" id="CHEBI:57705"/>
    </ligand>
</feature>
<feature type="binding site" evidence="1">
    <location>
        <position position="112"/>
    </location>
    <ligand>
        <name>Mg(2+)</name>
        <dbReference type="ChEBI" id="CHEBI:18420"/>
    </ligand>
</feature>
<feature type="binding site" evidence="1">
    <location>
        <position position="149"/>
    </location>
    <ligand>
        <name>UDP-N-acetyl-alpha-D-glucosamine</name>
        <dbReference type="ChEBI" id="CHEBI:57705"/>
    </ligand>
</feature>
<feature type="binding site" evidence="1">
    <location>
        <position position="163"/>
    </location>
    <ligand>
        <name>UDP-N-acetyl-alpha-D-glucosamine</name>
        <dbReference type="ChEBI" id="CHEBI:57705"/>
    </ligand>
</feature>
<feature type="binding site" evidence="1">
    <location>
        <position position="178"/>
    </location>
    <ligand>
        <name>UDP-N-acetyl-alpha-D-glucosamine</name>
        <dbReference type="ChEBI" id="CHEBI:57705"/>
    </ligand>
</feature>
<feature type="binding site" evidence="1">
    <location>
        <position position="236"/>
    </location>
    <ligand>
        <name>Mg(2+)</name>
        <dbReference type="ChEBI" id="CHEBI:18420"/>
    </ligand>
</feature>
<feature type="binding site" evidence="1">
    <location>
        <position position="236"/>
    </location>
    <ligand>
        <name>UDP-N-acetyl-alpha-D-glucosamine</name>
        <dbReference type="ChEBI" id="CHEBI:57705"/>
    </ligand>
</feature>
<feature type="binding site" evidence="1">
    <location>
        <position position="341"/>
    </location>
    <ligand>
        <name>UDP-N-acetyl-alpha-D-glucosamine</name>
        <dbReference type="ChEBI" id="CHEBI:57705"/>
    </ligand>
</feature>
<feature type="binding site" evidence="1">
    <location>
        <position position="359"/>
    </location>
    <ligand>
        <name>UDP-N-acetyl-alpha-D-glucosamine</name>
        <dbReference type="ChEBI" id="CHEBI:57705"/>
    </ligand>
</feature>
<feature type="binding site" evidence="1">
    <location>
        <position position="374"/>
    </location>
    <ligand>
        <name>UDP-N-acetyl-alpha-D-glucosamine</name>
        <dbReference type="ChEBI" id="CHEBI:57705"/>
    </ligand>
</feature>
<feature type="binding site" evidence="1">
    <location>
        <position position="385"/>
    </location>
    <ligand>
        <name>UDP-N-acetyl-alpha-D-glucosamine</name>
        <dbReference type="ChEBI" id="CHEBI:57705"/>
    </ligand>
</feature>
<feature type="binding site" evidence="1">
    <location>
        <position position="388"/>
    </location>
    <ligand>
        <name>acetyl-CoA</name>
        <dbReference type="ChEBI" id="CHEBI:57288"/>
    </ligand>
</feature>
<feature type="binding site" evidence="1">
    <location>
        <begin position="394"/>
        <end position="395"/>
    </location>
    <ligand>
        <name>acetyl-CoA</name>
        <dbReference type="ChEBI" id="CHEBI:57288"/>
    </ligand>
</feature>
<feature type="binding site" evidence="1">
    <location>
        <position position="413"/>
    </location>
    <ligand>
        <name>acetyl-CoA</name>
        <dbReference type="ChEBI" id="CHEBI:57288"/>
    </ligand>
</feature>
<feature type="binding site" evidence="1">
    <location>
        <position position="431"/>
    </location>
    <ligand>
        <name>acetyl-CoA</name>
        <dbReference type="ChEBI" id="CHEBI:57288"/>
    </ligand>
</feature>